<protein>
    <recommendedName>
        <fullName evidence="1">4-hydroxy-tetrahydrodipicolinate reductase</fullName>
        <shortName evidence="1">HTPA reductase</shortName>
        <ecNumber evidence="1">1.17.1.8</ecNumber>
    </recommendedName>
</protein>
<evidence type="ECO:0000255" key="1">
    <source>
        <dbReference type="HAMAP-Rule" id="MF_00102"/>
    </source>
</evidence>
<evidence type="ECO:0000305" key="2"/>
<proteinExistence type="inferred from homology"/>
<organism>
    <name type="scientific">Sinorhizobium medicae (strain WSM419)</name>
    <name type="common">Ensifer medicae</name>
    <dbReference type="NCBI Taxonomy" id="366394"/>
    <lineage>
        <taxon>Bacteria</taxon>
        <taxon>Pseudomonadati</taxon>
        <taxon>Pseudomonadota</taxon>
        <taxon>Alphaproteobacteria</taxon>
        <taxon>Hyphomicrobiales</taxon>
        <taxon>Rhizobiaceae</taxon>
        <taxon>Sinorhizobium/Ensifer group</taxon>
        <taxon>Sinorhizobium</taxon>
    </lineage>
</organism>
<comment type="function">
    <text evidence="1">Catalyzes the conversion of 4-hydroxy-tetrahydrodipicolinate (HTPA) to tetrahydrodipicolinate.</text>
</comment>
<comment type="catalytic activity">
    <reaction evidence="1">
        <text>(S)-2,3,4,5-tetrahydrodipicolinate + NAD(+) + H2O = (2S,4S)-4-hydroxy-2,3,4,5-tetrahydrodipicolinate + NADH + H(+)</text>
        <dbReference type="Rhea" id="RHEA:35323"/>
        <dbReference type="ChEBI" id="CHEBI:15377"/>
        <dbReference type="ChEBI" id="CHEBI:15378"/>
        <dbReference type="ChEBI" id="CHEBI:16845"/>
        <dbReference type="ChEBI" id="CHEBI:57540"/>
        <dbReference type="ChEBI" id="CHEBI:57945"/>
        <dbReference type="ChEBI" id="CHEBI:67139"/>
        <dbReference type="EC" id="1.17.1.8"/>
    </reaction>
</comment>
<comment type="catalytic activity">
    <reaction evidence="1">
        <text>(S)-2,3,4,5-tetrahydrodipicolinate + NADP(+) + H2O = (2S,4S)-4-hydroxy-2,3,4,5-tetrahydrodipicolinate + NADPH + H(+)</text>
        <dbReference type="Rhea" id="RHEA:35331"/>
        <dbReference type="ChEBI" id="CHEBI:15377"/>
        <dbReference type="ChEBI" id="CHEBI:15378"/>
        <dbReference type="ChEBI" id="CHEBI:16845"/>
        <dbReference type="ChEBI" id="CHEBI:57783"/>
        <dbReference type="ChEBI" id="CHEBI:58349"/>
        <dbReference type="ChEBI" id="CHEBI:67139"/>
        <dbReference type="EC" id="1.17.1.8"/>
    </reaction>
</comment>
<comment type="pathway">
    <text evidence="1">Amino-acid biosynthesis; L-lysine biosynthesis via DAP pathway; (S)-tetrahydrodipicolinate from L-aspartate: step 4/4.</text>
</comment>
<comment type="subcellular location">
    <subcellularLocation>
        <location evidence="1">Cytoplasm</location>
    </subcellularLocation>
</comment>
<comment type="similarity">
    <text evidence="1">Belongs to the DapB family.</text>
</comment>
<comment type="caution">
    <text evidence="2">Was originally thought to be a dihydrodipicolinate reductase (DHDPR), catalyzing the conversion of dihydrodipicolinate to tetrahydrodipicolinate. However, it was shown in E.coli that the substrate of the enzymatic reaction is not dihydrodipicolinate (DHDP) but in fact (2S,4S)-4-hydroxy-2,3,4,5-tetrahydrodipicolinic acid (HTPA), the product released by the DapA-catalyzed reaction.</text>
</comment>
<accession>A6UEW2</accession>
<name>DAPB_SINMW</name>
<feature type="chain" id="PRO_1000008643" description="4-hydroxy-tetrahydrodipicolinate reductase">
    <location>
        <begin position="1"/>
        <end position="272"/>
    </location>
</feature>
<feature type="active site" description="Proton donor/acceptor" evidence="1">
    <location>
        <position position="160"/>
    </location>
</feature>
<feature type="active site" description="Proton donor" evidence="1">
    <location>
        <position position="164"/>
    </location>
</feature>
<feature type="binding site" evidence="1">
    <location>
        <begin position="12"/>
        <end position="17"/>
    </location>
    <ligand>
        <name>NAD(+)</name>
        <dbReference type="ChEBI" id="CHEBI:57540"/>
    </ligand>
</feature>
<feature type="binding site" evidence="1">
    <location>
        <position position="38"/>
    </location>
    <ligand>
        <name>NAD(+)</name>
        <dbReference type="ChEBI" id="CHEBI:57540"/>
    </ligand>
</feature>
<feature type="binding site" evidence="1">
    <location>
        <position position="39"/>
    </location>
    <ligand>
        <name>NADP(+)</name>
        <dbReference type="ChEBI" id="CHEBI:58349"/>
    </ligand>
</feature>
<feature type="binding site" evidence="1">
    <location>
        <begin position="102"/>
        <end position="104"/>
    </location>
    <ligand>
        <name>NAD(+)</name>
        <dbReference type="ChEBI" id="CHEBI:57540"/>
    </ligand>
</feature>
<feature type="binding site" evidence="1">
    <location>
        <begin position="126"/>
        <end position="129"/>
    </location>
    <ligand>
        <name>NAD(+)</name>
        <dbReference type="ChEBI" id="CHEBI:57540"/>
    </ligand>
</feature>
<feature type="binding site" evidence="1">
    <location>
        <position position="161"/>
    </location>
    <ligand>
        <name>(S)-2,3,4,5-tetrahydrodipicolinate</name>
        <dbReference type="ChEBI" id="CHEBI:16845"/>
    </ligand>
</feature>
<feature type="binding site" evidence="1">
    <location>
        <begin position="170"/>
        <end position="171"/>
    </location>
    <ligand>
        <name>(S)-2,3,4,5-tetrahydrodipicolinate</name>
        <dbReference type="ChEBI" id="CHEBI:16845"/>
    </ligand>
</feature>
<dbReference type="EC" id="1.17.1.8" evidence="1"/>
<dbReference type="EMBL" id="CP000738">
    <property type="protein sequence ID" value="ABR62192.1"/>
    <property type="molecule type" value="Genomic_DNA"/>
</dbReference>
<dbReference type="RefSeq" id="WP_012067573.1">
    <property type="nucleotide sequence ID" value="NC_009636.1"/>
</dbReference>
<dbReference type="RefSeq" id="YP_001329027.1">
    <property type="nucleotide sequence ID" value="NC_009636.1"/>
</dbReference>
<dbReference type="SMR" id="A6UEW2"/>
<dbReference type="STRING" id="366394.Smed_3371"/>
<dbReference type="GeneID" id="61610922"/>
<dbReference type="KEGG" id="smd:Smed_3371"/>
<dbReference type="PATRIC" id="fig|366394.8.peg.6617"/>
<dbReference type="eggNOG" id="COG0289">
    <property type="taxonomic scope" value="Bacteria"/>
</dbReference>
<dbReference type="HOGENOM" id="CLU_047479_2_1_5"/>
<dbReference type="OrthoDB" id="9790352at2"/>
<dbReference type="UniPathway" id="UPA00034">
    <property type="reaction ID" value="UER00018"/>
</dbReference>
<dbReference type="Proteomes" id="UP000001108">
    <property type="component" value="Chromosome"/>
</dbReference>
<dbReference type="GO" id="GO:0005829">
    <property type="term" value="C:cytosol"/>
    <property type="evidence" value="ECO:0007669"/>
    <property type="project" value="TreeGrafter"/>
</dbReference>
<dbReference type="GO" id="GO:0008839">
    <property type="term" value="F:4-hydroxy-tetrahydrodipicolinate reductase"/>
    <property type="evidence" value="ECO:0007669"/>
    <property type="project" value="UniProtKB-EC"/>
</dbReference>
<dbReference type="GO" id="GO:0051287">
    <property type="term" value="F:NAD binding"/>
    <property type="evidence" value="ECO:0007669"/>
    <property type="project" value="UniProtKB-UniRule"/>
</dbReference>
<dbReference type="GO" id="GO:0050661">
    <property type="term" value="F:NADP binding"/>
    <property type="evidence" value="ECO:0007669"/>
    <property type="project" value="UniProtKB-UniRule"/>
</dbReference>
<dbReference type="GO" id="GO:0016726">
    <property type="term" value="F:oxidoreductase activity, acting on CH or CH2 groups, NAD or NADP as acceptor"/>
    <property type="evidence" value="ECO:0007669"/>
    <property type="project" value="UniProtKB-UniRule"/>
</dbReference>
<dbReference type="GO" id="GO:0019877">
    <property type="term" value="P:diaminopimelate biosynthetic process"/>
    <property type="evidence" value="ECO:0007669"/>
    <property type="project" value="UniProtKB-UniRule"/>
</dbReference>
<dbReference type="GO" id="GO:0009089">
    <property type="term" value="P:lysine biosynthetic process via diaminopimelate"/>
    <property type="evidence" value="ECO:0007669"/>
    <property type="project" value="UniProtKB-UniRule"/>
</dbReference>
<dbReference type="CDD" id="cd02274">
    <property type="entry name" value="DHDPR_N"/>
    <property type="match status" value="1"/>
</dbReference>
<dbReference type="FunFam" id="3.30.360.10:FF:000004">
    <property type="entry name" value="4-hydroxy-tetrahydrodipicolinate reductase"/>
    <property type="match status" value="1"/>
</dbReference>
<dbReference type="Gene3D" id="3.30.360.10">
    <property type="entry name" value="Dihydrodipicolinate Reductase, domain 2"/>
    <property type="match status" value="1"/>
</dbReference>
<dbReference type="Gene3D" id="3.40.50.720">
    <property type="entry name" value="NAD(P)-binding Rossmann-like Domain"/>
    <property type="match status" value="1"/>
</dbReference>
<dbReference type="HAMAP" id="MF_00102">
    <property type="entry name" value="DapB"/>
    <property type="match status" value="1"/>
</dbReference>
<dbReference type="InterPro" id="IPR022663">
    <property type="entry name" value="DapB_C"/>
</dbReference>
<dbReference type="InterPro" id="IPR000846">
    <property type="entry name" value="DapB_N"/>
</dbReference>
<dbReference type="InterPro" id="IPR022664">
    <property type="entry name" value="DapB_N_CS"/>
</dbReference>
<dbReference type="InterPro" id="IPR023940">
    <property type="entry name" value="DHDPR_bac"/>
</dbReference>
<dbReference type="InterPro" id="IPR036291">
    <property type="entry name" value="NAD(P)-bd_dom_sf"/>
</dbReference>
<dbReference type="NCBIfam" id="TIGR00036">
    <property type="entry name" value="dapB"/>
    <property type="match status" value="1"/>
</dbReference>
<dbReference type="PANTHER" id="PTHR20836:SF0">
    <property type="entry name" value="4-HYDROXY-TETRAHYDRODIPICOLINATE REDUCTASE 1, CHLOROPLASTIC-RELATED"/>
    <property type="match status" value="1"/>
</dbReference>
<dbReference type="PANTHER" id="PTHR20836">
    <property type="entry name" value="DIHYDRODIPICOLINATE REDUCTASE"/>
    <property type="match status" value="1"/>
</dbReference>
<dbReference type="Pfam" id="PF05173">
    <property type="entry name" value="DapB_C"/>
    <property type="match status" value="1"/>
</dbReference>
<dbReference type="Pfam" id="PF01113">
    <property type="entry name" value="DapB_N"/>
    <property type="match status" value="1"/>
</dbReference>
<dbReference type="PIRSF" id="PIRSF000161">
    <property type="entry name" value="DHPR"/>
    <property type="match status" value="1"/>
</dbReference>
<dbReference type="SUPFAM" id="SSF55347">
    <property type="entry name" value="Glyceraldehyde-3-phosphate dehydrogenase-like, C-terminal domain"/>
    <property type="match status" value="1"/>
</dbReference>
<dbReference type="SUPFAM" id="SSF51735">
    <property type="entry name" value="NAD(P)-binding Rossmann-fold domains"/>
    <property type="match status" value="1"/>
</dbReference>
<dbReference type="PROSITE" id="PS01298">
    <property type="entry name" value="DAPB"/>
    <property type="match status" value="1"/>
</dbReference>
<sequence>MSETDMRLVVVGAAGRMGQTLIRIVHETPGVRLHAAIERSGSPFLGRDAGELAGVGQMGVAVSDKPLEAFVEAEGVLDFTAPSATVEFADLAAQARIVHVVGTTGCSADDEARIRAAARHARVIKSGNMSLGVNLLGVLTEKAARALPAQGWDIEILEMHHRHKVDAPSGTALLLGEAAARGRGIKLADHSVRVRDGHTGARVEGAIGFATLRGGSVIGEHSVVIAGEGEMVTLSHSATDRSIFARGAVSAAIWGRSQKPGFYSMLDVLGLD</sequence>
<reference key="1">
    <citation type="submission" date="2007-06" db="EMBL/GenBank/DDBJ databases">
        <title>Complete sequence of Sinorhizobium medicae WSM419 chromosome.</title>
        <authorList>
            <consortium name="US DOE Joint Genome Institute"/>
            <person name="Copeland A."/>
            <person name="Lucas S."/>
            <person name="Lapidus A."/>
            <person name="Barry K."/>
            <person name="Glavina del Rio T."/>
            <person name="Dalin E."/>
            <person name="Tice H."/>
            <person name="Pitluck S."/>
            <person name="Chain P."/>
            <person name="Malfatti S."/>
            <person name="Shin M."/>
            <person name="Vergez L."/>
            <person name="Schmutz J."/>
            <person name="Larimer F."/>
            <person name="Land M."/>
            <person name="Hauser L."/>
            <person name="Kyrpides N."/>
            <person name="Mikhailova N."/>
            <person name="Reeve W.G."/>
            <person name="Richardson P."/>
        </authorList>
    </citation>
    <scope>NUCLEOTIDE SEQUENCE [LARGE SCALE GENOMIC DNA]</scope>
    <source>
        <strain>WSM419</strain>
    </source>
</reference>
<gene>
    <name evidence="1" type="primary">dapB</name>
    <name type="ordered locus">Smed_3371</name>
</gene>
<keyword id="KW-0028">Amino-acid biosynthesis</keyword>
<keyword id="KW-0963">Cytoplasm</keyword>
<keyword id="KW-0220">Diaminopimelate biosynthesis</keyword>
<keyword id="KW-0457">Lysine biosynthesis</keyword>
<keyword id="KW-0520">NAD</keyword>
<keyword id="KW-0521">NADP</keyword>
<keyword id="KW-0560">Oxidoreductase</keyword>